<accession>A8MU10</accession>
<name>YQ047_HUMAN</name>
<reference key="1">
    <citation type="journal article" date="2000" name="Proc. Natl. Acad. Sci. U.S.A.">
        <title>Shotgun sequencing of the human transcriptome with ORF expressed sequence tags.</title>
        <authorList>
            <person name="Dias Neto E."/>
            <person name="Correa R.G."/>
            <person name="Verjovski-Almeida S."/>
            <person name="Briones M.R.S."/>
            <person name="Nagai M.A."/>
            <person name="da Silva W. Jr."/>
            <person name="Zago M.A."/>
            <person name="Bordin S."/>
            <person name="Costa F.F."/>
            <person name="Goldman G.H."/>
            <person name="Carvalho A.F."/>
            <person name="Matsukuma A."/>
            <person name="Baia G.S."/>
            <person name="Simpson D.H."/>
            <person name="Brunstein A."/>
            <person name="de Oliveira P.S.L."/>
            <person name="Bucher P."/>
            <person name="Jongeneel C.V."/>
            <person name="O'Hare M.J."/>
            <person name="Soares F."/>
            <person name="Brentani R.R."/>
            <person name="Reis L.F.L."/>
            <person name="de Souza S.J."/>
            <person name="Simpson A.J.G."/>
        </authorList>
    </citation>
    <scope>NUCLEOTIDE SEQUENCE [LARGE SCALE MRNA]</scope>
</reference>
<reference key="2">
    <citation type="journal article" date="2006" name="Nature">
        <title>DNA sequence of human chromosome 17 and analysis of rearrangement in the human lineage.</title>
        <authorList>
            <person name="Zody M.C."/>
            <person name="Garber M."/>
            <person name="Adams D.J."/>
            <person name="Sharpe T."/>
            <person name="Harrow J."/>
            <person name="Lupski J.R."/>
            <person name="Nicholson C."/>
            <person name="Searle S.M."/>
            <person name="Wilming L."/>
            <person name="Young S.K."/>
            <person name="Abouelleil A."/>
            <person name="Allen N.R."/>
            <person name="Bi W."/>
            <person name="Bloom T."/>
            <person name="Borowsky M.L."/>
            <person name="Bugalter B.E."/>
            <person name="Butler J."/>
            <person name="Chang J.L."/>
            <person name="Chen C.-K."/>
            <person name="Cook A."/>
            <person name="Corum B."/>
            <person name="Cuomo C.A."/>
            <person name="de Jong P.J."/>
            <person name="DeCaprio D."/>
            <person name="Dewar K."/>
            <person name="FitzGerald M."/>
            <person name="Gilbert J."/>
            <person name="Gibson R."/>
            <person name="Gnerre S."/>
            <person name="Goldstein S."/>
            <person name="Grafham D.V."/>
            <person name="Grocock R."/>
            <person name="Hafez N."/>
            <person name="Hagopian D.S."/>
            <person name="Hart E."/>
            <person name="Norman C.H."/>
            <person name="Humphray S."/>
            <person name="Jaffe D.B."/>
            <person name="Jones M."/>
            <person name="Kamal M."/>
            <person name="Khodiyar V.K."/>
            <person name="LaButti K."/>
            <person name="Laird G."/>
            <person name="Lehoczky J."/>
            <person name="Liu X."/>
            <person name="Lokyitsang T."/>
            <person name="Loveland J."/>
            <person name="Lui A."/>
            <person name="Macdonald P."/>
            <person name="Major J.E."/>
            <person name="Matthews L."/>
            <person name="Mauceli E."/>
            <person name="McCarroll S.A."/>
            <person name="Mihalev A.H."/>
            <person name="Mudge J."/>
            <person name="Nguyen C."/>
            <person name="Nicol R."/>
            <person name="O'Leary S.B."/>
            <person name="Osoegawa K."/>
            <person name="Schwartz D.C."/>
            <person name="Shaw-Smith C."/>
            <person name="Stankiewicz P."/>
            <person name="Steward C."/>
            <person name="Swarbreck D."/>
            <person name="Venkataraman V."/>
            <person name="Whittaker C.A."/>
            <person name="Yang X."/>
            <person name="Zimmer A.R."/>
            <person name="Bradley A."/>
            <person name="Hubbard T."/>
            <person name="Birren B.W."/>
            <person name="Rogers J."/>
            <person name="Lander E.S."/>
            <person name="Nusbaum C."/>
        </authorList>
    </citation>
    <scope>NUCLEOTIDE SEQUENCE [LARGE SCALE GENOMIC DNA]</scope>
</reference>
<dbReference type="EMBL" id="BG989194">
    <property type="status" value="NOT_ANNOTATED_CDS"/>
    <property type="molecule type" value="mRNA"/>
</dbReference>
<dbReference type="EMBL" id="AC087491">
    <property type="status" value="NOT_ANNOTATED_CDS"/>
    <property type="molecule type" value="Genomic_DNA"/>
</dbReference>
<dbReference type="SwissPalm" id="A8MU10"/>
<dbReference type="BioMuta" id="-"/>
<dbReference type="neXtProt" id="NX_A8MU10"/>
<dbReference type="InParanoid" id="A8MU10"/>
<dbReference type="PAN-GO" id="A8MU10">
    <property type="GO annotations" value="0 GO annotations based on evolutionary models"/>
</dbReference>
<dbReference type="PhylomeDB" id="A8MU10"/>
<dbReference type="Pharos" id="A8MU10">
    <property type="development level" value="Tdark"/>
</dbReference>
<dbReference type="Proteomes" id="UP000005640">
    <property type="component" value="Unplaced"/>
</dbReference>
<dbReference type="RNAct" id="A8MU10">
    <property type="molecule type" value="protein"/>
</dbReference>
<keyword id="KW-1185">Reference proteome</keyword>
<proteinExistence type="predicted"/>
<sequence>MGSIPSKPCNNPEGPLLQGMEAADWTGIGVCLPPGGARGHIYCCTRLCHQRAASAHRSLLLPRTVQTGGTEREKPGPGQRKRGAHCSACKRSSTRPS</sequence>
<organism>
    <name type="scientific">Homo sapiens</name>
    <name type="common">Human</name>
    <dbReference type="NCBI Taxonomy" id="9606"/>
    <lineage>
        <taxon>Eukaryota</taxon>
        <taxon>Metazoa</taxon>
        <taxon>Chordata</taxon>
        <taxon>Craniata</taxon>
        <taxon>Vertebrata</taxon>
        <taxon>Euteleostomi</taxon>
        <taxon>Mammalia</taxon>
        <taxon>Eutheria</taxon>
        <taxon>Euarchontoglires</taxon>
        <taxon>Primates</taxon>
        <taxon>Haplorrhini</taxon>
        <taxon>Catarrhini</taxon>
        <taxon>Hominidae</taxon>
        <taxon>Homo</taxon>
    </lineage>
</organism>
<feature type="chain" id="PRO_0000348059" description="Putative uncharacterized protein ENSP00000381562">
    <location>
        <begin position="1"/>
        <end position="97"/>
    </location>
</feature>
<feature type="region of interest" description="Disordered" evidence="1">
    <location>
        <begin position="58"/>
        <end position="97"/>
    </location>
</feature>
<feature type="sequence conflict" description="In Ref. 1; BG989194." evidence="2" ref="1">
    <original>M</original>
    <variation>R</variation>
    <location>
        <position position="1"/>
    </location>
</feature>
<feature type="sequence conflict" description="In Ref. 1; BG989194." evidence="2" ref="1">
    <original>C</original>
    <variation>G</variation>
    <location>
        <position position="9"/>
    </location>
</feature>
<feature type="sequence conflict" description="In Ref. 1; BG989194." evidence="2" ref="1">
    <original>M</original>
    <variation>R</variation>
    <location>
        <position position="20"/>
    </location>
</feature>
<feature type="sequence conflict" description="In Ref. 1; BG989194." evidence="2" ref="1">
    <original>W</original>
    <variation>G</variation>
    <location>
        <position position="25"/>
    </location>
</feature>
<feature type="sequence conflict" description="In Ref. 1; BG989194." evidence="2" ref="1">
    <original>I</original>
    <variation>M</variation>
    <location>
        <position position="28"/>
    </location>
</feature>
<feature type="sequence conflict" description="In Ref. 1; BG989194." evidence="2" ref="1">
    <original>L</original>
    <variation>W</variation>
    <location>
        <position position="47"/>
    </location>
</feature>
<feature type="sequence conflict" description="In Ref. 1; BG989194." evidence="2" ref="1">
    <original>L</original>
    <variation>R</variation>
    <location>
        <position position="60"/>
    </location>
</feature>
<protein>
    <recommendedName>
        <fullName>Putative uncharacterized protein ENSP00000381562</fullName>
    </recommendedName>
</protein>
<evidence type="ECO:0000256" key="1">
    <source>
        <dbReference type="SAM" id="MobiDB-lite"/>
    </source>
</evidence>
<evidence type="ECO:0000305" key="2"/>